<evidence type="ECO:0000255" key="1">
    <source>
        <dbReference type="HAMAP-Rule" id="MF_01249"/>
    </source>
</evidence>
<feature type="chain" id="PRO_1000067171" description="HPr kinase/phosphorylase">
    <location>
        <begin position="1"/>
        <end position="310"/>
    </location>
</feature>
<feature type="region of interest" description="Important for the catalytic mechanism of both phosphorylation and dephosphorylation" evidence="1">
    <location>
        <begin position="199"/>
        <end position="208"/>
    </location>
</feature>
<feature type="region of interest" description="Important for the catalytic mechanism of dephosphorylation" evidence="1">
    <location>
        <begin position="262"/>
        <end position="267"/>
    </location>
</feature>
<feature type="active site" evidence="1">
    <location>
        <position position="136"/>
    </location>
</feature>
<feature type="active site" evidence="1">
    <location>
        <position position="157"/>
    </location>
</feature>
<feature type="active site" description="Proton acceptor; for phosphorylation activity. Proton donor; for dephosphorylation activity" evidence="1">
    <location>
        <position position="175"/>
    </location>
</feature>
<feature type="active site" evidence="1">
    <location>
        <position position="241"/>
    </location>
</feature>
<feature type="binding site" evidence="1">
    <location>
        <begin position="151"/>
        <end position="158"/>
    </location>
    <ligand>
        <name>ATP</name>
        <dbReference type="ChEBI" id="CHEBI:30616"/>
    </ligand>
</feature>
<feature type="binding site" evidence="1">
    <location>
        <position position="158"/>
    </location>
    <ligand>
        <name>Mg(2+)</name>
        <dbReference type="ChEBI" id="CHEBI:18420"/>
    </ligand>
</feature>
<feature type="binding site" evidence="1">
    <location>
        <position position="200"/>
    </location>
    <ligand>
        <name>Mg(2+)</name>
        <dbReference type="ChEBI" id="CHEBI:18420"/>
    </ligand>
</feature>
<sequence>MLTTEKLVETLKLDLIAGEEGLSKPIKNADISRPGLEMAGYFSHYASDRIQLLGTTELSFYNLLPDKDRAGRMRKLCRPETPAIIVTRGLQPPEELVEAAKELNTPLIVAKDATTSLMSRLTTFLEHALAKTTSLHGVLVDVYGVGVLITGDSGIGKSETALELVKRGHRLVADDNVEIRQINKDELIGKPPKLIEHLLEIRGLGIINVMTLFGAGSILTEKRIRLNINLENWNKQKLYDRVGLNEETLSILDTEITKKTIPVRPGRNVAVIIEVAAMNYRLNIMGINTAEEFSERLNEEIIKNSHKSEE</sequence>
<reference key="1">
    <citation type="journal article" date="2006" name="Lancet">
        <title>Complete genome sequence of USA300, an epidemic clone of community-acquired meticillin-resistant Staphylococcus aureus.</title>
        <authorList>
            <person name="Diep B.A."/>
            <person name="Gill S.R."/>
            <person name="Chang R.F."/>
            <person name="Phan T.H."/>
            <person name="Chen J.H."/>
            <person name="Davidson M.G."/>
            <person name="Lin F."/>
            <person name="Lin J."/>
            <person name="Carleton H.A."/>
            <person name="Mongodin E.F."/>
            <person name="Sensabaugh G.F."/>
            <person name="Perdreau-Remington F."/>
        </authorList>
    </citation>
    <scope>NUCLEOTIDE SEQUENCE [LARGE SCALE GENOMIC DNA]</scope>
    <source>
        <strain>USA300</strain>
    </source>
</reference>
<dbReference type="EC" id="2.7.11.-" evidence="1"/>
<dbReference type="EC" id="2.7.4.-" evidence="1"/>
<dbReference type="EMBL" id="CP000255">
    <property type="protein sequence ID" value="ABD22351.1"/>
    <property type="molecule type" value="Genomic_DNA"/>
</dbReference>
<dbReference type="RefSeq" id="WP_000958224.1">
    <property type="nucleotide sequence ID" value="NZ_CP027476.1"/>
</dbReference>
<dbReference type="SMR" id="Q2FIN3"/>
<dbReference type="KEGG" id="saa:SAUSA300_0743"/>
<dbReference type="HOGENOM" id="CLU_052030_0_1_9"/>
<dbReference type="OMA" id="IFPGKNI"/>
<dbReference type="Proteomes" id="UP000001939">
    <property type="component" value="Chromosome"/>
</dbReference>
<dbReference type="GO" id="GO:0005524">
    <property type="term" value="F:ATP binding"/>
    <property type="evidence" value="ECO:0007669"/>
    <property type="project" value="UniProtKB-UniRule"/>
</dbReference>
<dbReference type="GO" id="GO:0000287">
    <property type="term" value="F:magnesium ion binding"/>
    <property type="evidence" value="ECO:0007669"/>
    <property type="project" value="UniProtKB-UniRule"/>
</dbReference>
<dbReference type="GO" id="GO:0000155">
    <property type="term" value="F:phosphorelay sensor kinase activity"/>
    <property type="evidence" value="ECO:0007669"/>
    <property type="project" value="InterPro"/>
</dbReference>
<dbReference type="GO" id="GO:0004674">
    <property type="term" value="F:protein serine/threonine kinase activity"/>
    <property type="evidence" value="ECO:0007669"/>
    <property type="project" value="UniProtKB-KW"/>
</dbReference>
<dbReference type="GO" id="GO:0004712">
    <property type="term" value="F:protein serine/threonine/tyrosine kinase activity"/>
    <property type="evidence" value="ECO:0007669"/>
    <property type="project" value="UniProtKB-UniRule"/>
</dbReference>
<dbReference type="GO" id="GO:0006109">
    <property type="term" value="P:regulation of carbohydrate metabolic process"/>
    <property type="evidence" value="ECO:0007669"/>
    <property type="project" value="UniProtKB-UniRule"/>
</dbReference>
<dbReference type="CDD" id="cd01918">
    <property type="entry name" value="HprK_C"/>
    <property type="match status" value="1"/>
</dbReference>
<dbReference type="FunFam" id="3.40.1390.20:FF:000002">
    <property type="entry name" value="HPr kinase/phosphorylase"/>
    <property type="match status" value="1"/>
</dbReference>
<dbReference type="FunFam" id="3.40.50.300:FF:000174">
    <property type="entry name" value="HPr kinase/phosphorylase"/>
    <property type="match status" value="1"/>
</dbReference>
<dbReference type="Gene3D" id="3.40.1390.20">
    <property type="entry name" value="HprK N-terminal domain-like"/>
    <property type="match status" value="1"/>
</dbReference>
<dbReference type="Gene3D" id="3.40.50.300">
    <property type="entry name" value="P-loop containing nucleotide triphosphate hydrolases"/>
    <property type="match status" value="1"/>
</dbReference>
<dbReference type="HAMAP" id="MF_01249">
    <property type="entry name" value="HPr_kinase"/>
    <property type="match status" value="1"/>
</dbReference>
<dbReference type="InterPro" id="IPR003755">
    <property type="entry name" value="HPr(Ser)_kin/Pase"/>
</dbReference>
<dbReference type="InterPro" id="IPR011104">
    <property type="entry name" value="Hpr_kin/Pase_C"/>
</dbReference>
<dbReference type="InterPro" id="IPR011126">
    <property type="entry name" value="Hpr_kin/Pase_Hpr_N"/>
</dbReference>
<dbReference type="InterPro" id="IPR027417">
    <property type="entry name" value="P-loop_NTPase"/>
</dbReference>
<dbReference type="InterPro" id="IPR028979">
    <property type="entry name" value="Ser_kin/Pase_Hpr-like_N_sf"/>
</dbReference>
<dbReference type="NCBIfam" id="TIGR00679">
    <property type="entry name" value="hpr-ser"/>
    <property type="match status" value="1"/>
</dbReference>
<dbReference type="PANTHER" id="PTHR30305:SF1">
    <property type="entry name" value="HPR KINASE_PHOSPHORYLASE"/>
    <property type="match status" value="1"/>
</dbReference>
<dbReference type="PANTHER" id="PTHR30305">
    <property type="entry name" value="PROTEIN YJDM-RELATED"/>
    <property type="match status" value="1"/>
</dbReference>
<dbReference type="Pfam" id="PF07475">
    <property type="entry name" value="Hpr_kinase_C"/>
    <property type="match status" value="1"/>
</dbReference>
<dbReference type="Pfam" id="PF02603">
    <property type="entry name" value="Hpr_kinase_N"/>
    <property type="match status" value="1"/>
</dbReference>
<dbReference type="SUPFAM" id="SSF75138">
    <property type="entry name" value="HprK N-terminal domain-like"/>
    <property type="match status" value="1"/>
</dbReference>
<dbReference type="SUPFAM" id="SSF53795">
    <property type="entry name" value="PEP carboxykinase-like"/>
    <property type="match status" value="1"/>
</dbReference>
<accession>Q2FIN3</accession>
<keyword id="KW-0067">ATP-binding</keyword>
<keyword id="KW-0119">Carbohydrate metabolism</keyword>
<keyword id="KW-0418">Kinase</keyword>
<keyword id="KW-0460">Magnesium</keyword>
<keyword id="KW-0479">Metal-binding</keyword>
<keyword id="KW-0511">Multifunctional enzyme</keyword>
<keyword id="KW-0547">Nucleotide-binding</keyword>
<keyword id="KW-0723">Serine/threonine-protein kinase</keyword>
<keyword id="KW-0808">Transferase</keyword>
<comment type="function">
    <text evidence="1">Catalyzes the ATP- as well as the pyrophosphate-dependent phosphorylation of a specific serine residue in HPr, a phosphocarrier protein of the phosphoenolpyruvate-dependent sugar phosphotransferase system (PTS). HprK/P also catalyzes the pyrophosphate-producing, inorganic phosphate-dependent dephosphorylation (phosphorolysis) of seryl-phosphorylated HPr (P-Ser-HPr). The two antagonistic activities of HprK/P are regulated by several intracellular metabolites, which change their concentration in response to the absence or presence of rapidly metabolisable carbon sources (glucose, fructose, etc.) in the growth medium. Therefore, by controlling the phosphorylation state of HPr, HPrK/P is a sensor enzyme that plays a major role in the regulation of carbon metabolism and sugar transport: it mediates carbon catabolite repression (CCR), and regulates PTS-catalyzed carbohydrate uptake and inducer exclusion.</text>
</comment>
<comment type="catalytic activity">
    <reaction evidence="1">
        <text>[HPr protein]-L-serine + ATP = [HPr protein]-O-phospho-L-serine + ADP + H(+)</text>
        <dbReference type="Rhea" id="RHEA:46600"/>
        <dbReference type="Rhea" id="RHEA-COMP:11602"/>
        <dbReference type="Rhea" id="RHEA-COMP:11603"/>
        <dbReference type="ChEBI" id="CHEBI:15378"/>
        <dbReference type="ChEBI" id="CHEBI:29999"/>
        <dbReference type="ChEBI" id="CHEBI:30616"/>
        <dbReference type="ChEBI" id="CHEBI:83421"/>
        <dbReference type="ChEBI" id="CHEBI:456216"/>
    </reaction>
</comment>
<comment type="catalytic activity">
    <reaction evidence="1">
        <text>[HPr protein]-O-phospho-L-serine + phosphate + H(+) = [HPr protein]-L-serine + diphosphate</text>
        <dbReference type="Rhea" id="RHEA:46604"/>
        <dbReference type="Rhea" id="RHEA-COMP:11602"/>
        <dbReference type="Rhea" id="RHEA-COMP:11603"/>
        <dbReference type="ChEBI" id="CHEBI:15378"/>
        <dbReference type="ChEBI" id="CHEBI:29999"/>
        <dbReference type="ChEBI" id="CHEBI:33019"/>
        <dbReference type="ChEBI" id="CHEBI:43474"/>
        <dbReference type="ChEBI" id="CHEBI:83421"/>
    </reaction>
</comment>
<comment type="cofactor">
    <cofactor evidence="1">
        <name>Mg(2+)</name>
        <dbReference type="ChEBI" id="CHEBI:18420"/>
    </cofactor>
</comment>
<comment type="subunit">
    <text evidence="1">Homohexamer.</text>
</comment>
<comment type="domain">
    <text evidence="1">The Walker A ATP-binding motif also binds Pi and PPi.</text>
</comment>
<comment type="miscellaneous">
    <text evidence="1">Both phosphorylation and phosphorolysis are carried out by the same active site and suggest a common mechanism for both reactions.</text>
</comment>
<comment type="similarity">
    <text evidence="1">Belongs to the HPrK/P family.</text>
</comment>
<gene>
    <name evidence="1" type="primary">hprK</name>
    <name type="ordered locus">SAUSA300_0743</name>
</gene>
<organism>
    <name type="scientific">Staphylococcus aureus (strain USA300)</name>
    <dbReference type="NCBI Taxonomy" id="367830"/>
    <lineage>
        <taxon>Bacteria</taxon>
        <taxon>Bacillati</taxon>
        <taxon>Bacillota</taxon>
        <taxon>Bacilli</taxon>
        <taxon>Bacillales</taxon>
        <taxon>Staphylococcaceae</taxon>
        <taxon>Staphylococcus</taxon>
    </lineage>
</organism>
<name>HPRK_STAA3</name>
<proteinExistence type="inferred from homology"/>
<protein>
    <recommendedName>
        <fullName evidence="1">HPr kinase/phosphorylase</fullName>
        <shortName evidence="1">HPrK/P</shortName>
        <ecNumber evidence="1">2.7.11.-</ecNumber>
        <ecNumber evidence="1">2.7.4.-</ecNumber>
    </recommendedName>
    <alternativeName>
        <fullName evidence="1">HPr(Ser) kinase/phosphorylase</fullName>
    </alternativeName>
</protein>